<feature type="chain" id="PRO_0000387468" description="19.0 kDa class II heat shock protein">
    <location>
        <begin position="1"/>
        <end position="175"/>
    </location>
</feature>
<feature type="domain" description="sHSP" evidence="1">
    <location>
        <begin position="42"/>
        <end position="165"/>
    </location>
</feature>
<feature type="region of interest" description="Disordered" evidence="2">
    <location>
        <begin position="145"/>
        <end position="175"/>
    </location>
</feature>
<feature type="compositionally biased region" description="Basic and acidic residues" evidence="2">
    <location>
        <begin position="146"/>
        <end position="161"/>
    </location>
</feature>
<comment type="subunit">
    <text>May form oligomeric structures.</text>
</comment>
<comment type="subcellular location">
    <subcellularLocation>
        <location evidence="3">Cytoplasm</location>
    </subcellularLocation>
</comment>
<comment type="similarity">
    <text evidence="1">Belongs to the small heat shock protein (HSP20) family.</text>
</comment>
<organism>
    <name type="scientific">Oryza sativa subsp. japonica</name>
    <name type="common">Rice</name>
    <dbReference type="NCBI Taxonomy" id="39947"/>
    <lineage>
        <taxon>Eukaryota</taxon>
        <taxon>Viridiplantae</taxon>
        <taxon>Streptophyta</taxon>
        <taxon>Embryophyta</taxon>
        <taxon>Tracheophyta</taxon>
        <taxon>Spermatophyta</taxon>
        <taxon>Magnoliopsida</taxon>
        <taxon>Liliopsida</taxon>
        <taxon>Poales</taxon>
        <taxon>Poaceae</taxon>
        <taxon>BOP clade</taxon>
        <taxon>Oryzoideae</taxon>
        <taxon>Oryzeae</taxon>
        <taxon>Oryzinae</taxon>
        <taxon>Oryza</taxon>
        <taxon>Oryza sativa</taxon>
    </lineage>
</organism>
<protein>
    <recommendedName>
        <fullName>19.0 kDa class II heat shock protein</fullName>
    </recommendedName>
    <alternativeName>
        <fullName>19.0 kDa heat shock protein</fullName>
        <shortName>OsHsp19.0</shortName>
    </alternativeName>
</protein>
<keyword id="KW-0963">Cytoplasm</keyword>
<keyword id="KW-1185">Reference proteome</keyword>
<keyword id="KW-0346">Stress response</keyword>
<sequence>MELSVVGGEPLLAVAMQQLLDLDLPDELERQLNPPTRAYVRDRRAMANTPMDVKELRASGALVLAVDMPGVAPADVRVEVEDGNVLAISGERRRPAGDGDDGGEGVKYLRMERRMGKFMRRFPLPESADLDGVRAEYKDGVLTVTVDKKPPPEPKKPRVVEVKVAGAGEPKGKGK</sequence>
<proteinExistence type="inferred from homology"/>
<accession>Q6Z6L5</accession>
<accession>A0A0P0VGI1</accession>
<dbReference type="EMBL" id="AP004996">
    <property type="protein sequence ID" value="BAD17178.1"/>
    <property type="molecule type" value="Genomic_DNA"/>
</dbReference>
<dbReference type="EMBL" id="AP008208">
    <property type="protein sequence ID" value="BAF08216.1"/>
    <property type="molecule type" value="Genomic_DNA"/>
</dbReference>
<dbReference type="EMBL" id="AP014958">
    <property type="protein sequence ID" value="BAS77669.1"/>
    <property type="molecule type" value="Genomic_DNA"/>
</dbReference>
<dbReference type="EMBL" id="CM000139">
    <property type="protein sequence ID" value="EAZ22248.1"/>
    <property type="molecule type" value="Genomic_DNA"/>
</dbReference>
<dbReference type="RefSeq" id="XP_015623098.1">
    <property type="nucleotide sequence ID" value="XM_015767612.1"/>
</dbReference>
<dbReference type="SMR" id="Q6Z6L5"/>
<dbReference type="FunCoup" id="Q6Z6L5">
    <property type="interactions" value="429"/>
</dbReference>
<dbReference type="STRING" id="39947.Q6Z6L5"/>
<dbReference type="PaxDb" id="39947-Q6Z6L5"/>
<dbReference type="EnsemblPlants" id="Os02t0217900-00">
    <property type="protein sequence ID" value="Os02t0217900-00"/>
    <property type="gene ID" value="Os02g0217900"/>
</dbReference>
<dbReference type="Gramene" id="Os02t0217900-00">
    <property type="protein sequence ID" value="Os02t0217900-00"/>
    <property type="gene ID" value="Os02g0217900"/>
</dbReference>
<dbReference type="KEGG" id="dosa:Os02g0217900"/>
<dbReference type="eggNOG" id="KOG0710">
    <property type="taxonomic scope" value="Eukaryota"/>
</dbReference>
<dbReference type="HOGENOM" id="CLU_046737_5_1_1"/>
<dbReference type="InParanoid" id="Q6Z6L5"/>
<dbReference type="OMA" id="ERHMNAP"/>
<dbReference type="OrthoDB" id="1431247at2759"/>
<dbReference type="Proteomes" id="UP000000763">
    <property type="component" value="Chromosome 2"/>
</dbReference>
<dbReference type="Proteomes" id="UP000007752">
    <property type="component" value="Chromosome 2"/>
</dbReference>
<dbReference type="Proteomes" id="UP000059680">
    <property type="component" value="Chromosome 2"/>
</dbReference>
<dbReference type="GO" id="GO:0005737">
    <property type="term" value="C:cytoplasm"/>
    <property type="evidence" value="ECO:0007669"/>
    <property type="project" value="UniProtKB-SubCell"/>
</dbReference>
<dbReference type="GO" id="GO:0051082">
    <property type="term" value="F:unfolded protein binding"/>
    <property type="evidence" value="ECO:0000318"/>
    <property type="project" value="GO_Central"/>
</dbReference>
<dbReference type="GO" id="GO:0051259">
    <property type="term" value="P:protein complex oligomerization"/>
    <property type="evidence" value="ECO:0000318"/>
    <property type="project" value="GO_Central"/>
</dbReference>
<dbReference type="GO" id="GO:0006457">
    <property type="term" value="P:protein folding"/>
    <property type="evidence" value="ECO:0000318"/>
    <property type="project" value="GO_Central"/>
</dbReference>
<dbReference type="GO" id="GO:0009408">
    <property type="term" value="P:response to heat"/>
    <property type="evidence" value="ECO:0000318"/>
    <property type="project" value="GO_Central"/>
</dbReference>
<dbReference type="GO" id="GO:0042542">
    <property type="term" value="P:response to hydrogen peroxide"/>
    <property type="evidence" value="ECO:0000318"/>
    <property type="project" value="GO_Central"/>
</dbReference>
<dbReference type="GO" id="GO:0009651">
    <property type="term" value="P:response to salt stress"/>
    <property type="evidence" value="ECO:0000318"/>
    <property type="project" value="GO_Central"/>
</dbReference>
<dbReference type="CDD" id="cd06464">
    <property type="entry name" value="ACD_sHsps-like"/>
    <property type="match status" value="1"/>
</dbReference>
<dbReference type="FunFam" id="2.60.40.790:FF:000010">
    <property type="entry name" value="17.3 kDa class II heat shock protein-like"/>
    <property type="match status" value="1"/>
</dbReference>
<dbReference type="Gene3D" id="2.60.40.790">
    <property type="match status" value="1"/>
</dbReference>
<dbReference type="InterPro" id="IPR002068">
    <property type="entry name" value="A-crystallin/Hsp20_dom"/>
</dbReference>
<dbReference type="InterPro" id="IPR008978">
    <property type="entry name" value="HSP20-like_chaperone"/>
</dbReference>
<dbReference type="InterPro" id="IPR031107">
    <property type="entry name" value="Small_HSP"/>
</dbReference>
<dbReference type="PANTHER" id="PTHR11527">
    <property type="entry name" value="HEAT-SHOCK PROTEIN 20 FAMILY MEMBER"/>
    <property type="match status" value="1"/>
</dbReference>
<dbReference type="Pfam" id="PF00011">
    <property type="entry name" value="HSP20"/>
    <property type="match status" value="1"/>
</dbReference>
<dbReference type="SUPFAM" id="SSF49764">
    <property type="entry name" value="HSP20-like chaperones"/>
    <property type="match status" value="1"/>
</dbReference>
<dbReference type="PROSITE" id="PS01031">
    <property type="entry name" value="SHSP"/>
    <property type="match status" value="1"/>
</dbReference>
<gene>
    <name type="primary">HSP19.0</name>
    <name type="ordered locus">Os02g0217900</name>
    <name type="ordered locus">LOC_Os02g12610</name>
    <name type="ORF">OsJ_05903</name>
    <name type="ORF">P0027A02.5</name>
</gene>
<reference key="1">
    <citation type="journal article" date="2005" name="Nature">
        <title>The map-based sequence of the rice genome.</title>
        <authorList>
            <consortium name="International rice genome sequencing project (IRGSP)"/>
        </authorList>
    </citation>
    <scope>NUCLEOTIDE SEQUENCE [LARGE SCALE GENOMIC DNA]</scope>
    <source>
        <strain>cv. Nipponbare</strain>
    </source>
</reference>
<reference key="2">
    <citation type="journal article" date="2008" name="Nucleic Acids Res.">
        <title>The rice annotation project database (RAP-DB): 2008 update.</title>
        <authorList>
            <consortium name="The rice annotation project (RAP)"/>
        </authorList>
    </citation>
    <scope>GENOME REANNOTATION</scope>
    <source>
        <strain>cv. Nipponbare</strain>
    </source>
</reference>
<reference key="3">
    <citation type="journal article" date="2013" name="Rice">
        <title>Improvement of the Oryza sativa Nipponbare reference genome using next generation sequence and optical map data.</title>
        <authorList>
            <person name="Kawahara Y."/>
            <person name="de la Bastide M."/>
            <person name="Hamilton J.P."/>
            <person name="Kanamori H."/>
            <person name="McCombie W.R."/>
            <person name="Ouyang S."/>
            <person name="Schwartz D.C."/>
            <person name="Tanaka T."/>
            <person name="Wu J."/>
            <person name="Zhou S."/>
            <person name="Childs K.L."/>
            <person name="Davidson R.M."/>
            <person name="Lin H."/>
            <person name="Quesada-Ocampo L."/>
            <person name="Vaillancourt B."/>
            <person name="Sakai H."/>
            <person name="Lee S.S."/>
            <person name="Kim J."/>
            <person name="Numa H."/>
            <person name="Itoh T."/>
            <person name="Buell C.R."/>
            <person name="Matsumoto T."/>
        </authorList>
    </citation>
    <scope>GENOME REANNOTATION</scope>
    <source>
        <strain>cv. Nipponbare</strain>
    </source>
</reference>
<reference key="4">
    <citation type="journal article" date="2005" name="PLoS Biol.">
        <title>The genomes of Oryza sativa: a history of duplications.</title>
        <authorList>
            <person name="Yu J."/>
            <person name="Wang J."/>
            <person name="Lin W."/>
            <person name="Li S."/>
            <person name="Li H."/>
            <person name="Zhou J."/>
            <person name="Ni P."/>
            <person name="Dong W."/>
            <person name="Hu S."/>
            <person name="Zeng C."/>
            <person name="Zhang J."/>
            <person name="Zhang Y."/>
            <person name="Li R."/>
            <person name="Xu Z."/>
            <person name="Li S."/>
            <person name="Li X."/>
            <person name="Zheng H."/>
            <person name="Cong L."/>
            <person name="Lin L."/>
            <person name="Yin J."/>
            <person name="Geng J."/>
            <person name="Li G."/>
            <person name="Shi J."/>
            <person name="Liu J."/>
            <person name="Lv H."/>
            <person name="Li J."/>
            <person name="Wang J."/>
            <person name="Deng Y."/>
            <person name="Ran L."/>
            <person name="Shi X."/>
            <person name="Wang X."/>
            <person name="Wu Q."/>
            <person name="Li C."/>
            <person name="Ren X."/>
            <person name="Wang J."/>
            <person name="Wang X."/>
            <person name="Li D."/>
            <person name="Liu D."/>
            <person name="Zhang X."/>
            <person name="Ji Z."/>
            <person name="Zhao W."/>
            <person name="Sun Y."/>
            <person name="Zhang Z."/>
            <person name="Bao J."/>
            <person name="Han Y."/>
            <person name="Dong L."/>
            <person name="Ji J."/>
            <person name="Chen P."/>
            <person name="Wu S."/>
            <person name="Liu J."/>
            <person name="Xiao Y."/>
            <person name="Bu D."/>
            <person name="Tan J."/>
            <person name="Yang L."/>
            <person name="Ye C."/>
            <person name="Zhang J."/>
            <person name="Xu J."/>
            <person name="Zhou Y."/>
            <person name="Yu Y."/>
            <person name="Zhang B."/>
            <person name="Zhuang S."/>
            <person name="Wei H."/>
            <person name="Liu B."/>
            <person name="Lei M."/>
            <person name="Yu H."/>
            <person name="Li Y."/>
            <person name="Xu H."/>
            <person name="Wei S."/>
            <person name="He X."/>
            <person name="Fang L."/>
            <person name="Zhang Z."/>
            <person name="Zhang Y."/>
            <person name="Huang X."/>
            <person name="Su Z."/>
            <person name="Tong W."/>
            <person name="Li J."/>
            <person name="Tong Z."/>
            <person name="Li S."/>
            <person name="Ye J."/>
            <person name="Wang L."/>
            <person name="Fang L."/>
            <person name="Lei T."/>
            <person name="Chen C.-S."/>
            <person name="Chen H.-C."/>
            <person name="Xu Z."/>
            <person name="Li H."/>
            <person name="Huang H."/>
            <person name="Zhang F."/>
            <person name="Xu H."/>
            <person name="Li N."/>
            <person name="Zhao C."/>
            <person name="Li S."/>
            <person name="Dong L."/>
            <person name="Huang Y."/>
            <person name="Li L."/>
            <person name="Xi Y."/>
            <person name="Qi Q."/>
            <person name="Li W."/>
            <person name="Zhang B."/>
            <person name="Hu W."/>
            <person name="Zhang Y."/>
            <person name="Tian X."/>
            <person name="Jiao Y."/>
            <person name="Liang X."/>
            <person name="Jin J."/>
            <person name="Gao L."/>
            <person name="Zheng W."/>
            <person name="Hao B."/>
            <person name="Liu S.-M."/>
            <person name="Wang W."/>
            <person name="Yuan L."/>
            <person name="Cao M."/>
            <person name="McDermott J."/>
            <person name="Samudrala R."/>
            <person name="Wang J."/>
            <person name="Wong G.K.-S."/>
            <person name="Yang H."/>
        </authorList>
    </citation>
    <scope>NUCLEOTIDE SEQUENCE [LARGE SCALE GENOMIC DNA]</scope>
    <source>
        <strain>cv. Nipponbare</strain>
    </source>
</reference>
<reference key="5">
    <citation type="journal article" date="2009" name="BMC Genomics">
        <title>Rice sHsp genes: genomic organization and expression profiling under stress and development.</title>
        <authorList>
            <person name="Sarkar N.K."/>
            <person name="Kim Y.-K."/>
            <person name="Grover A."/>
        </authorList>
    </citation>
    <scope>GENE FAMILY</scope>
</reference>
<evidence type="ECO:0000255" key="1">
    <source>
        <dbReference type="PROSITE-ProRule" id="PRU00285"/>
    </source>
</evidence>
<evidence type="ECO:0000256" key="2">
    <source>
        <dbReference type="SAM" id="MobiDB-lite"/>
    </source>
</evidence>
<evidence type="ECO:0000305" key="3"/>
<name>HSP19_ORYSJ</name>